<gene>
    <name type="primary">rpoE</name>
    <name type="ordered locus">LL0634</name>
    <name type="ORF">L0141</name>
</gene>
<proteinExistence type="inferred from homology"/>
<comment type="function">
    <text evidence="1">Participates in both the initiation and recycling phases of transcription. In the presence of the delta subunit, RNAP displays an increased specificity of transcription, a decreased affinity for nucleic acids, and an increased efficiency of RNA synthesis because of enhanced recycling (By similarity).</text>
</comment>
<comment type="subunit">
    <text evidence="1">RNAP is composed of a core of 2 alpha, a beta and a beta' subunits. The core is associated with a delta subunit and one of several sigma factors (By similarity).</text>
</comment>
<comment type="similarity">
    <text evidence="4">Belongs to the RpoE family.</text>
</comment>
<keyword id="KW-0240">DNA-directed RNA polymerase</keyword>
<keyword id="KW-0548">Nucleotidyltransferase</keyword>
<keyword id="KW-1185">Reference proteome</keyword>
<keyword id="KW-0804">Transcription</keyword>
<keyword id="KW-0808">Transferase</keyword>
<sequence>MKITALEGQKISELSMIEVAHALLEQNGKEMQFSEIIRAIQDYLEKSDDEIKASISRFYTEINTDGSFIPLGNNIWALRSWYAIDEIDEEVIALDEIEDEEEEKPAKKRKKVNAFGIEDEIDPEDEEGTKETTEEDMSYDTQAEDEDKDDVAAYDAELAEVELDNVDEEVDIDVEDDEDDSDDTDED</sequence>
<evidence type="ECO:0000250" key="1"/>
<evidence type="ECO:0000255" key="2">
    <source>
        <dbReference type="PROSITE-ProRule" id="PRU01261"/>
    </source>
</evidence>
<evidence type="ECO:0000256" key="3">
    <source>
        <dbReference type="SAM" id="MobiDB-lite"/>
    </source>
</evidence>
<evidence type="ECO:0000305" key="4"/>
<protein>
    <recommendedName>
        <fullName>Probable DNA-directed RNA polymerase subunit delta</fullName>
    </recommendedName>
    <alternativeName>
        <fullName>RNAP delta factor</fullName>
    </alternativeName>
</protein>
<dbReference type="EMBL" id="AE005176">
    <property type="protein sequence ID" value="AAK04732.1"/>
    <property type="molecule type" value="Genomic_DNA"/>
</dbReference>
<dbReference type="PIR" id="B86704">
    <property type="entry name" value="B86704"/>
</dbReference>
<dbReference type="RefSeq" id="NP_266790.1">
    <property type="nucleotide sequence ID" value="NC_002662.1"/>
</dbReference>
<dbReference type="RefSeq" id="WP_003129551.1">
    <property type="nucleotide sequence ID" value="NC_002662.1"/>
</dbReference>
<dbReference type="SMR" id="Q9CHT4"/>
<dbReference type="PaxDb" id="272623-L0141"/>
<dbReference type="EnsemblBacteria" id="AAK04732">
    <property type="protein sequence ID" value="AAK04732"/>
    <property type="gene ID" value="L0141"/>
</dbReference>
<dbReference type="KEGG" id="lla:L0141"/>
<dbReference type="PATRIC" id="fig|272623.7.peg.678"/>
<dbReference type="eggNOG" id="COG3343">
    <property type="taxonomic scope" value="Bacteria"/>
</dbReference>
<dbReference type="HOGENOM" id="CLU_116648_0_0_9"/>
<dbReference type="OrthoDB" id="401223at2"/>
<dbReference type="Proteomes" id="UP000002196">
    <property type="component" value="Chromosome"/>
</dbReference>
<dbReference type="GO" id="GO:0000428">
    <property type="term" value="C:DNA-directed RNA polymerase complex"/>
    <property type="evidence" value="ECO:0007669"/>
    <property type="project" value="UniProtKB-KW"/>
</dbReference>
<dbReference type="GO" id="GO:0003899">
    <property type="term" value="F:DNA-directed RNA polymerase activity"/>
    <property type="evidence" value="ECO:0007669"/>
    <property type="project" value="UniProtKB-UniRule"/>
</dbReference>
<dbReference type="GO" id="GO:0006351">
    <property type="term" value="P:DNA-templated transcription"/>
    <property type="evidence" value="ECO:0007669"/>
    <property type="project" value="InterPro"/>
</dbReference>
<dbReference type="GO" id="GO:0006355">
    <property type="term" value="P:regulation of DNA-templated transcription"/>
    <property type="evidence" value="ECO:0007669"/>
    <property type="project" value="UniProtKB-UniRule"/>
</dbReference>
<dbReference type="Gene3D" id="1.10.10.1250">
    <property type="entry name" value="RNA polymerase, subunit delta, N-terminal domain"/>
    <property type="match status" value="1"/>
</dbReference>
<dbReference type="HAMAP" id="MF_00357">
    <property type="entry name" value="RNApol_bact_RpoE"/>
    <property type="match status" value="1"/>
</dbReference>
<dbReference type="InterPro" id="IPR007759">
    <property type="entry name" value="Asxl_HARE-HTH"/>
</dbReference>
<dbReference type="InterPro" id="IPR038087">
    <property type="entry name" value="RNAP_delta_N_dom_sf"/>
</dbReference>
<dbReference type="InterPro" id="IPR029757">
    <property type="entry name" value="RpoE"/>
</dbReference>
<dbReference type="NCBIfam" id="TIGR04567">
    <property type="entry name" value="RNAP_delt_lowGC"/>
    <property type="match status" value="1"/>
</dbReference>
<dbReference type="Pfam" id="PF05066">
    <property type="entry name" value="HARE-HTH"/>
    <property type="match status" value="1"/>
</dbReference>
<dbReference type="PROSITE" id="PS51913">
    <property type="entry name" value="HTH_HARE"/>
    <property type="match status" value="1"/>
</dbReference>
<reference key="1">
    <citation type="journal article" date="2001" name="Genome Res.">
        <title>The complete genome sequence of the lactic acid bacterium Lactococcus lactis ssp. lactis IL1403.</title>
        <authorList>
            <person name="Bolotin A."/>
            <person name="Wincker P."/>
            <person name="Mauger S."/>
            <person name="Jaillon O."/>
            <person name="Malarme K."/>
            <person name="Weissenbach J."/>
            <person name="Ehrlich S.D."/>
            <person name="Sorokin A."/>
        </authorList>
    </citation>
    <scope>NUCLEOTIDE SEQUENCE [LARGE SCALE GENOMIC DNA]</scope>
    <source>
        <strain>IL1403</strain>
    </source>
</reference>
<name>RPOE_LACLA</name>
<accession>Q9CHT4</accession>
<organism>
    <name type="scientific">Lactococcus lactis subsp. lactis (strain IL1403)</name>
    <name type="common">Streptococcus lactis</name>
    <dbReference type="NCBI Taxonomy" id="272623"/>
    <lineage>
        <taxon>Bacteria</taxon>
        <taxon>Bacillati</taxon>
        <taxon>Bacillota</taxon>
        <taxon>Bacilli</taxon>
        <taxon>Lactobacillales</taxon>
        <taxon>Streptococcaceae</taxon>
        <taxon>Lactococcus</taxon>
    </lineage>
</organism>
<feature type="chain" id="PRO_0000204313" description="Probable DNA-directed RNA polymerase subunit delta">
    <location>
        <begin position="1"/>
        <end position="187"/>
    </location>
</feature>
<feature type="domain" description="HTH HARE-type" evidence="2">
    <location>
        <begin position="14"/>
        <end position="81"/>
    </location>
</feature>
<feature type="region of interest" description="Disordered" evidence="3">
    <location>
        <begin position="97"/>
        <end position="187"/>
    </location>
</feature>
<feature type="compositionally biased region" description="Acidic residues" evidence="3">
    <location>
        <begin position="117"/>
        <end position="149"/>
    </location>
</feature>
<feature type="compositionally biased region" description="Acidic residues" evidence="3">
    <location>
        <begin position="157"/>
        <end position="187"/>
    </location>
</feature>